<proteinExistence type="evidence at transcript level"/>
<sequence>MSLPMSPVSPINTTTSTSTTTTPLSPPSSIENSSHPLSTSISNNSITSDSSLDSNTSTSSTTTTNYGTKTPSGNARIFNCTLCQRAFTREEHLTRHTLSTHNKLKPFTCGICSRPFSRRDLLLRHAKNLHQGSEVAVSRIRKSYKHCNKDNDSKSGSDSNTNKTNKNGKKQEQEDDEEEGSRSDSSSGADDEDSNTSSGGSNYHAIGSGNKRFVNNSPQLKKILTNGSVPSTTTTSTTTVPTSTNNDTASITNSSTSHIHQRSLNVEDYDTPEKKRLKMSVNMLVS</sequence>
<name>TRY4_CANAL</name>
<accession>Q5ANC8</accession>
<accession>A0A1D8PK76</accession>
<dbReference type="EMBL" id="CP017625">
    <property type="protein sequence ID" value="AOW28520.1"/>
    <property type="molecule type" value="Genomic_DNA"/>
</dbReference>
<dbReference type="RefSeq" id="XP_723186.1">
    <property type="nucleotide sequence ID" value="XM_718093.1"/>
</dbReference>
<dbReference type="SMR" id="Q5ANC8"/>
<dbReference type="BioGRID" id="1218334">
    <property type="interactions" value="1"/>
</dbReference>
<dbReference type="STRING" id="237561.Q5ANC8"/>
<dbReference type="EnsemblFungi" id="C3_05050W_A-T">
    <property type="protein sequence ID" value="C3_05050W_A-T-p1"/>
    <property type="gene ID" value="C3_05050W_A"/>
</dbReference>
<dbReference type="GeneID" id="3635240"/>
<dbReference type="KEGG" id="cal:CAALFM_C305050WA"/>
<dbReference type="CGD" id="CAL0000199253">
    <property type="gene designation" value="TRY4"/>
</dbReference>
<dbReference type="VEuPathDB" id="FungiDB:C3_05050W_A"/>
<dbReference type="HOGENOM" id="CLU_083654_0_0_1"/>
<dbReference type="InParanoid" id="Q5ANC8"/>
<dbReference type="OMA" id="PRIYNCK"/>
<dbReference type="OrthoDB" id="10018191at2759"/>
<dbReference type="PRO" id="PR:Q5ANC8"/>
<dbReference type="Proteomes" id="UP000000559">
    <property type="component" value="Chromosome 3"/>
</dbReference>
<dbReference type="GO" id="GO:0005634">
    <property type="term" value="C:nucleus"/>
    <property type="evidence" value="ECO:0007669"/>
    <property type="project" value="UniProtKB-SubCell"/>
</dbReference>
<dbReference type="GO" id="GO:0000981">
    <property type="term" value="F:DNA-binding transcription factor activity, RNA polymerase II-specific"/>
    <property type="evidence" value="ECO:0007669"/>
    <property type="project" value="InterPro"/>
</dbReference>
<dbReference type="GO" id="GO:0000978">
    <property type="term" value="F:RNA polymerase II cis-regulatory region sequence-specific DNA binding"/>
    <property type="evidence" value="ECO:0007669"/>
    <property type="project" value="InterPro"/>
</dbReference>
<dbReference type="GO" id="GO:0008270">
    <property type="term" value="F:zinc ion binding"/>
    <property type="evidence" value="ECO:0007669"/>
    <property type="project" value="UniProtKB-KW"/>
</dbReference>
<dbReference type="GO" id="GO:0007155">
    <property type="term" value="P:cell adhesion"/>
    <property type="evidence" value="ECO:0007669"/>
    <property type="project" value="UniProtKB-KW"/>
</dbReference>
<dbReference type="GO" id="GO:1900189">
    <property type="term" value="P:positive regulation of cell adhesion involved in single-species biofilm formation"/>
    <property type="evidence" value="ECO:0000315"/>
    <property type="project" value="CGD"/>
</dbReference>
<dbReference type="GO" id="GO:0010811">
    <property type="term" value="P:positive regulation of cell-substrate adhesion"/>
    <property type="evidence" value="ECO:0000315"/>
    <property type="project" value="CGD"/>
</dbReference>
<dbReference type="GO" id="GO:0006357">
    <property type="term" value="P:regulation of transcription by RNA polymerase II"/>
    <property type="evidence" value="ECO:0000315"/>
    <property type="project" value="CGD"/>
</dbReference>
<dbReference type="GO" id="GO:0044011">
    <property type="term" value="P:single-species biofilm formation on inanimate substrate"/>
    <property type="evidence" value="ECO:0000315"/>
    <property type="project" value="CGD"/>
</dbReference>
<dbReference type="Gene3D" id="3.30.160.60">
    <property type="entry name" value="Classic Zinc Finger"/>
    <property type="match status" value="2"/>
</dbReference>
<dbReference type="InterPro" id="IPR051059">
    <property type="entry name" value="VerF-like"/>
</dbReference>
<dbReference type="InterPro" id="IPR036236">
    <property type="entry name" value="Znf_C2H2_sf"/>
</dbReference>
<dbReference type="InterPro" id="IPR013087">
    <property type="entry name" value="Znf_C2H2_type"/>
</dbReference>
<dbReference type="PANTHER" id="PTHR40626">
    <property type="entry name" value="MIP31509P"/>
    <property type="match status" value="1"/>
</dbReference>
<dbReference type="PANTHER" id="PTHR40626:SF28">
    <property type="entry name" value="REGULATORY PROTEIN ADR1"/>
    <property type="match status" value="1"/>
</dbReference>
<dbReference type="Pfam" id="PF00096">
    <property type="entry name" value="zf-C2H2"/>
    <property type="match status" value="2"/>
</dbReference>
<dbReference type="SMART" id="SM00355">
    <property type="entry name" value="ZnF_C2H2"/>
    <property type="match status" value="2"/>
</dbReference>
<dbReference type="SUPFAM" id="SSF57667">
    <property type="entry name" value="beta-beta-alpha zinc fingers"/>
    <property type="match status" value="1"/>
</dbReference>
<dbReference type="PROSITE" id="PS00028">
    <property type="entry name" value="ZINC_FINGER_C2H2_1"/>
    <property type="match status" value="2"/>
</dbReference>
<dbReference type="PROSITE" id="PS50157">
    <property type="entry name" value="ZINC_FINGER_C2H2_2"/>
    <property type="match status" value="2"/>
</dbReference>
<evidence type="ECO:0000255" key="1">
    <source>
        <dbReference type="PROSITE-ProRule" id="PRU00042"/>
    </source>
</evidence>
<evidence type="ECO:0000256" key="2">
    <source>
        <dbReference type="SAM" id="MobiDB-lite"/>
    </source>
</evidence>
<evidence type="ECO:0000269" key="3">
    <source>
    </source>
</evidence>
<evidence type="ECO:0000269" key="4">
    <source>
    </source>
</evidence>
<evidence type="ECO:0000269" key="5">
    <source>
    </source>
</evidence>
<evidence type="ECO:0000269" key="6">
    <source>
    </source>
</evidence>
<evidence type="ECO:0000305" key="7"/>
<reference key="1">
    <citation type="journal article" date="2004" name="Proc. Natl. Acad. Sci. U.S.A.">
        <title>The diploid genome sequence of Candida albicans.</title>
        <authorList>
            <person name="Jones T."/>
            <person name="Federspiel N.A."/>
            <person name="Chibana H."/>
            <person name="Dungan J."/>
            <person name="Kalman S."/>
            <person name="Magee B.B."/>
            <person name="Newport G."/>
            <person name="Thorstenson Y.R."/>
            <person name="Agabian N."/>
            <person name="Magee P.T."/>
            <person name="Davis R.W."/>
            <person name="Scherer S."/>
        </authorList>
    </citation>
    <scope>NUCLEOTIDE SEQUENCE [LARGE SCALE GENOMIC DNA]</scope>
    <source>
        <strain>SC5314 / ATCC MYA-2876</strain>
    </source>
</reference>
<reference key="2">
    <citation type="journal article" date="2007" name="Genome Biol.">
        <title>Assembly of the Candida albicans genome into sixteen supercontigs aligned on the eight chromosomes.</title>
        <authorList>
            <person name="van het Hoog M."/>
            <person name="Rast T.J."/>
            <person name="Martchenko M."/>
            <person name="Grindle S."/>
            <person name="Dignard D."/>
            <person name="Hogues H."/>
            <person name="Cuomo C."/>
            <person name="Berriman M."/>
            <person name="Scherer S."/>
            <person name="Magee B.B."/>
            <person name="Whiteway M."/>
            <person name="Chibana H."/>
            <person name="Nantel A."/>
            <person name="Magee P.T."/>
        </authorList>
    </citation>
    <scope>GENOME REANNOTATION</scope>
    <source>
        <strain>SC5314 / ATCC MYA-2876</strain>
    </source>
</reference>
<reference key="3">
    <citation type="journal article" date="2013" name="Genome Biol.">
        <title>Assembly of a phased diploid Candida albicans genome facilitates allele-specific measurements and provides a simple model for repeat and indel structure.</title>
        <authorList>
            <person name="Muzzey D."/>
            <person name="Schwartz K."/>
            <person name="Weissman J.S."/>
            <person name="Sherlock G."/>
        </authorList>
    </citation>
    <scope>NUCLEOTIDE SEQUENCE [LARGE SCALE GENOMIC DNA]</scope>
    <scope>GENOME REANNOTATION</scope>
    <source>
        <strain>SC5314 / ATCC MYA-2876</strain>
    </source>
</reference>
<reference key="4">
    <citation type="journal article" date="2005" name="Eukaryot. Cell">
        <title>Genome-wide transcription profiling of the early phase of biofilm formation by Candida albicans.</title>
        <authorList>
            <person name="Murillo L.A."/>
            <person name="Newport G."/>
            <person name="Lan C.Y."/>
            <person name="Habelitz S."/>
            <person name="Dungan J."/>
            <person name="Agabian N.M."/>
        </authorList>
    </citation>
    <scope>INDUCTION</scope>
</reference>
<reference key="5">
    <citation type="journal article" date="2005" name="Res. Microbiol.">
        <title>Anchorage of Candida albicans Ssr1 to the cell wall, and transcript profiling of the null mutant.</title>
        <authorList>
            <person name="Garcera A."/>
            <person name="Castillo L."/>
            <person name="Martinez A.I."/>
            <person name="Elorza M.V."/>
            <person name="Valentin E."/>
            <person name="Sentandreu R."/>
        </authorList>
    </citation>
    <scope>INDUCTION</scope>
</reference>
<reference key="6">
    <citation type="journal article" date="2012" name="Cell">
        <title>A recently evolved transcriptional network controls biofilm development in Candida albicans.</title>
        <authorList>
            <person name="Nobile C.J."/>
            <person name="Fox E.P."/>
            <person name="Nett J.E."/>
            <person name="Sorrells T.R."/>
            <person name="Mitrovich Q.M."/>
            <person name="Hernday A.D."/>
            <person name="Tuch B.B."/>
            <person name="Andes D.R."/>
            <person name="Johnson A.D."/>
        </authorList>
    </citation>
    <scope>INDUCTION</scope>
</reference>
<reference key="7">
    <citation type="journal article" date="2012" name="PLoS Pathog.">
        <title>Portrait of Candida albicans adherence regulators.</title>
        <authorList>
            <person name="Finkel J.S."/>
            <person name="Xu W."/>
            <person name="Huang D."/>
            <person name="Hill E.M."/>
            <person name="Desai J.V."/>
            <person name="Woolford C.A."/>
            <person name="Nett J.E."/>
            <person name="Taff H."/>
            <person name="Norice C.T."/>
            <person name="Andes D.R."/>
            <person name="Lanni F."/>
            <person name="Mitchell A.P."/>
        </authorList>
    </citation>
    <scope>FUNCTION</scope>
    <scope>DISRUPTION PHENOTYPE</scope>
</reference>
<feature type="chain" id="PRO_0000426065" description="Transcriptional regulator of yeast form adherence 4">
    <location>
        <begin position="1"/>
        <end position="286"/>
    </location>
</feature>
<feature type="zinc finger region" description="C2H2-type 1" evidence="1">
    <location>
        <begin position="78"/>
        <end position="101"/>
    </location>
</feature>
<feature type="zinc finger region" description="C2H2-type 2" evidence="1">
    <location>
        <begin position="107"/>
        <end position="130"/>
    </location>
</feature>
<feature type="region of interest" description="Disordered" evidence="2">
    <location>
        <begin position="1"/>
        <end position="71"/>
    </location>
</feature>
<feature type="region of interest" description="Disordered" evidence="2">
    <location>
        <begin position="146"/>
        <end position="260"/>
    </location>
</feature>
<feature type="compositionally biased region" description="Low complexity" evidence="2">
    <location>
        <begin position="1"/>
        <end position="29"/>
    </location>
</feature>
<feature type="compositionally biased region" description="Low complexity" evidence="2">
    <location>
        <begin position="37"/>
        <end position="65"/>
    </location>
</feature>
<feature type="compositionally biased region" description="Low complexity" evidence="2">
    <location>
        <begin position="156"/>
        <end position="165"/>
    </location>
</feature>
<feature type="compositionally biased region" description="Low complexity" evidence="2">
    <location>
        <begin position="228"/>
        <end position="244"/>
    </location>
</feature>
<feature type="compositionally biased region" description="Polar residues" evidence="2">
    <location>
        <begin position="245"/>
        <end position="260"/>
    </location>
</feature>
<organism>
    <name type="scientific">Candida albicans (strain SC5314 / ATCC MYA-2876)</name>
    <name type="common">Yeast</name>
    <dbReference type="NCBI Taxonomy" id="237561"/>
    <lineage>
        <taxon>Eukaryota</taxon>
        <taxon>Fungi</taxon>
        <taxon>Dikarya</taxon>
        <taxon>Ascomycota</taxon>
        <taxon>Saccharomycotina</taxon>
        <taxon>Pichiomycetes</taxon>
        <taxon>Debaryomycetaceae</taxon>
        <taxon>Candida/Lodderomyces clade</taxon>
        <taxon>Candida</taxon>
    </lineage>
</organism>
<gene>
    <name type="primary">TRY4</name>
    <name type="ordered locus">CAALFM_C305050WA</name>
    <name type="ORF">CaO19.13396</name>
    <name type="ORF">CaO19.5975</name>
</gene>
<keyword id="KW-0130">Cell adhesion</keyword>
<keyword id="KW-0479">Metal-binding</keyword>
<keyword id="KW-0539">Nucleus</keyword>
<keyword id="KW-1185">Reference proteome</keyword>
<keyword id="KW-0677">Repeat</keyword>
<keyword id="KW-0804">Transcription</keyword>
<keyword id="KW-0805">Transcription regulation</keyword>
<keyword id="KW-0862">Zinc</keyword>
<keyword id="KW-0863">Zinc-finger</keyword>
<protein>
    <recommendedName>
        <fullName>Transcriptional regulator of yeast form adherence 4</fullName>
    </recommendedName>
</protein>
<comment type="function">
    <text evidence="6">Transcription factor required for yeast cell adherence to silicone substrate.</text>
</comment>
<comment type="subcellular location">
    <subcellularLocation>
        <location evidence="7">Nucleus</location>
    </subcellularLocation>
</comment>
<comment type="induction">
    <text evidence="3 4 5">Expression is induced in biofilm and repressed by fluconazole. Expression is also regulated by SS1.</text>
</comment>
<comment type="disruption phenotype">
    <text evidence="6">Decreases cell adherence to silicone substrate.</text>
</comment>